<sequence length="205" mass="22744">MHQPHDLQILPTPVIRLIEELSRLPGVGPKTASRLTFFLLRAPDELPRALANALIGLKQQVQLCSRCYFITQNDLCAICANPARDQRIVCVVEEPLDVVAIERTGVYRGLYHVLHGRIAPLEGMNREDIYFDELLDRVRAEPIDEVIIATNPNLEGEATAFHLQRALAPLGARVTRLARGLPTGGDLEWADPGTLGSALEGRREM</sequence>
<proteinExistence type="inferred from homology"/>
<comment type="function">
    <text evidence="1">May play a role in DNA repair. It seems to be involved in an RecBC-independent recombinational process of DNA repair. It may act with RecF and RecO.</text>
</comment>
<comment type="similarity">
    <text evidence="1">Belongs to the RecR family.</text>
</comment>
<organism>
    <name type="scientific">Roseiflexus castenholzii (strain DSM 13941 / HLO8)</name>
    <dbReference type="NCBI Taxonomy" id="383372"/>
    <lineage>
        <taxon>Bacteria</taxon>
        <taxon>Bacillati</taxon>
        <taxon>Chloroflexota</taxon>
        <taxon>Chloroflexia</taxon>
        <taxon>Chloroflexales</taxon>
        <taxon>Roseiflexineae</taxon>
        <taxon>Roseiflexaceae</taxon>
        <taxon>Roseiflexus</taxon>
    </lineage>
</organism>
<accession>A7NFA0</accession>
<keyword id="KW-0227">DNA damage</keyword>
<keyword id="KW-0233">DNA recombination</keyword>
<keyword id="KW-0234">DNA repair</keyword>
<keyword id="KW-0479">Metal-binding</keyword>
<keyword id="KW-1185">Reference proteome</keyword>
<keyword id="KW-0862">Zinc</keyword>
<keyword id="KW-0863">Zinc-finger</keyword>
<name>RECR_ROSCS</name>
<dbReference type="EMBL" id="CP000804">
    <property type="protein sequence ID" value="ABU58374.1"/>
    <property type="molecule type" value="Genomic_DNA"/>
</dbReference>
<dbReference type="RefSeq" id="WP_012120798.1">
    <property type="nucleotide sequence ID" value="NC_009767.1"/>
</dbReference>
<dbReference type="SMR" id="A7NFA0"/>
<dbReference type="STRING" id="383372.Rcas_2291"/>
<dbReference type="KEGG" id="rca:Rcas_2291"/>
<dbReference type="eggNOG" id="COG0353">
    <property type="taxonomic scope" value="Bacteria"/>
</dbReference>
<dbReference type="HOGENOM" id="CLU_060739_1_0_0"/>
<dbReference type="OrthoDB" id="9802672at2"/>
<dbReference type="Proteomes" id="UP000000263">
    <property type="component" value="Chromosome"/>
</dbReference>
<dbReference type="GO" id="GO:0003677">
    <property type="term" value="F:DNA binding"/>
    <property type="evidence" value="ECO:0007669"/>
    <property type="project" value="UniProtKB-UniRule"/>
</dbReference>
<dbReference type="GO" id="GO:0008270">
    <property type="term" value="F:zinc ion binding"/>
    <property type="evidence" value="ECO:0007669"/>
    <property type="project" value="UniProtKB-KW"/>
</dbReference>
<dbReference type="GO" id="GO:0006310">
    <property type="term" value="P:DNA recombination"/>
    <property type="evidence" value="ECO:0007669"/>
    <property type="project" value="UniProtKB-UniRule"/>
</dbReference>
<dbReference type="GO" id="GO:0006281">
    <property type="term" value="P:DNA repair"/>
    <property type="evidence" value="ECO:0007669"/>
    <property type="project" value="UniProtKB-UniRule"/>
</dbReference>
<dbReference type="CDD" id="cd01025">
    <property type="entry name" value="TOPRIM_recR"/>
    <property type="match status" value="1"/>
</dbReference>
<dbReference type="Gene3D" id="3.40.1360.10">
    <property type="match status" value="1"/>
</dbReference>
<dbReference type="Gene3D" id="6.10.250.240">
    <property type="match status" value="1"/>
</dbReference>
<dbReference type="Gene3D" id="1.10.8.420">
    <property type="entry name" value="RecR Domain 1"/>
    <property type="match status" value="1"/>
</dbReference>
<dbReference type="HAMAP" id="MF_00017">
    <property type="entry name" value="RecR"/>
    <property type="match status" value="1"/>
</dbReference>
<dbReference type="InterPro" id="IPR000093">
    <property type="entry name" value="DNA_Rcmb_RecR"/>
</dbReference>
<dbReference type="InterPro" id="IPR023627">
    <property type="entry name" value="Rcmb_RecR"/>
</dbReference>
<dbReference type="InterPro" id="IPR015967">
    <property type="entry name" value="Rcmb_RecR_Znf"/>
</dbReference>
<dbReference type="InterPro" id="IPR006171">
    <property type="entry name" value="TOPRIM_dom"/>
</dbReference>
<dbReference type="InterPro" id="IPR034137">
    <property type="entry name" value="TOPRIM_RecR"/>
</dbReference>
<dbReference type="NCBIfam" id="TIGR00615">
    <property type="entry name" value="recR"/>
    <property type="match status" value="1"/>
</dbReference>
<dbReference type="PANTHER" id="PTHR30446">
    <property type="entry name" value="RECOMBINATION PROTEIN RECR"/>
    <property type="match status" value="1"/>
</dbReference>
<dbReference type="PANTHER" id="PTHR30446:SF0">
    <property type="entry name" value="RECOMBINATION PROTEIN RECR"/>
    <property type="match status" value="1"/>
</dbReference>
<dbReference type="Pfam" id="PF21175">
    <property type="entry name" value="RecR_C"/>
    <property type="match status" value="1"/>
</dbReference>
<dbReference type="Pfam" id="PF21176">
    <property type="entry name" value="RecR_HhH"/>
    <property type="match status" value="1"/>
</dbReference>
<dbReference type="Pfam" id="PF02132">
    <property type="entry name" value="RecR_ZnF"/>
    <property type="match status" value="1"/>
</dbReference>
<dbReference type="Pfam" id="PF13662">
    <property type="entry name" value="Toprim_4"/>
    <property type="match status" value="1"/>
</dbReference>
<dbReference type="SMART" id="SM00493">
    <property type="entry name" value="TOPRIM"/>
    <property type="match status" value="1"/>
</dbReference>
<dbReference type="SUPFAM" id="SSF111304">
    <property type="entry name" value="Recombination protein RecR"/>
    <property type="match status" value="1"/>
</dbReference>
<dbReference type="PROSITE" id="PS01300">
    <property type="entry name" value="RECR"/>
    <property type="match status" value="1"/>
</dbReference>
<dbReference type="PROSITE" id="PS50880">
    <property type="entry name" value="TOPRIM"/>
    <property type="match status" value="1"/>
</dbReference>
<feature type="chain" id="PRO_1000074128" description="Recombination protein RecR">
    <location>
        <begin position="1"/>
        <end position="205"/>
    </location>
</feature>
<feature type="domain" description="Toprim" evidence="1">
    <location>
        <begin position="87"/>
        <end position="182"/>
    </location>
</feature>
<feature type="zinc finger region" description="C4-type" evidence="1">
    <location>
        <begin position="64"/>
        <end position="79"/>
    </location>
</feature>
<reference key="1">
    <citation type="submission" date="2007-08" db="EMBL/GenBank/DDBJ databases">
        <title>Complete sequence of Roseiflexus castenholzii DSM 13941.</title>
        <authorList>
            <consortium name="US DOE Joint Genome Institute"/>
            <person name="Copeland A."/>
            <person name="Lucas S."/>
            <person name="Lapidus A."/>
            <person name="Barry K."/>
            <person name="Glavina del Rio T."/>
            <person name="Dalin E."/>
            <person name="Tice H."/>
            <person name="Pitluck S."/>
            <person name="Thompson L.S."/>
            <person name="Brettin T."/>
            <person name="Bruce D."/>
            <person name="Detter J.C."/>
            <person name="Han C."/>
            <person name="Tapia R."/>
            <person name="Schmutz J."/>
            <person name="Larimer F."/>
            <person name="Land M."/>
            <person name="Hauser L."/>
            <person name="Kyrpides N."/>
            <person name="Mikhailova N."/>
            <person name="Bryant D.A."/>
            <person name="Hanada S."/>
            <person name="Tsukatani Y."/>
            <person name="Richardson P."/>
        </authorList>
    </citation>
    <scope>NUCLEOTIDE SEQUENCE [LARGE SCALE GENOMIC DNA]</scope>
    <source>
        <strain>DSM 13941 / HLO8</strain>
    </source>
</reference>
<gene>
    <name evidence="1" type="primary">recR</name>
    <name type="ordered locus">Rcas_2291</name>
</gene>
<evidence type="ECO:0000255" key="1">
    <source>
        <dbReference type="HAMAP-Rule" id="MF_00017"/>
    </source>
</evidence>
<protein>
    <recommendedName>
        <fullName evidence="1">Recombination protein RecR</fullName>
    </recommendedName>
</protein>